<sequence length="532" mass="59291">MQSFFTQWISRWIFSTNHKDIGTLYLIFGAFSGVLGGCMSMLIRMELAQPSNHLLLGNHQIYNVLITAHAFLMIFFMVMPVMIGGFGNWLVPIMIGSPDMAFPRLNNISFWLLPPSLCLLLMSALVEVGVGTGWTVYPPLSSIQSHSGGAVDLAIFSLHISGASSILGAVNFISTILNMRSPGQSMYRIPLFVWSILVTAFLLLLAVPVLAGAITMLLTDRNFNTSFFDASGGGDPILYQHLFWFFGHPEVYILILPGFGMISHIVSTFSRKPVFGYIGMVYAMVSIGVLGFIVWAHHMYTVGLDVDTRAYFTAATMIIAVPTGIKIFSWIATIWEGSIHLKTPMLFAIGFIFLFTIGGLTGIVLANSGLDISLHDTYYVVAHFHYVLSMGAVFAIFAGFYYWFGKITGLQYPETLGQIHFWSTFIGVNLTFMPMHFLGLAGMPRRIPDYPDAYAGWNLIASYGSYIALFSTLFFFYIVFVSLTSNNPCTNFPWEFNKSKTYGVSTLEWIVTSPPAYHTFEEMPLIYETKSN</sequence>
<geneLocation type="mitochondrion"/>
<feature type="chain" id="PRO_0000183313" description="Cytochrome c oxidase subunit 1">
    <location>
        <begin position="1"/>
        <end position="532"/>
    </location>
</feature>
<feature type="transmembrane region" description="Helical" evidence="3">
    <location>
        <begin position="23"/>
        <end position="43"/>
    </location>
</feature>
<feature type="transmembrane region" description="Helical" evidence="3">
    <location>
        <begin position="71"/>
        <end position="91"/>
    </location>
</feature>
<feature type="transmembrane region" description="Helical" evidence="3">
    <location>
        <begin position="110"/>
        <end position="130"/>
    </location>
</feature>
<feature type="transmembrane region" description="Helical" evidence="3">
    <location>
        <begin position="153"/>
        <end position="173"/>
    </location>
</feature>
<feature type="transmembrane region" description="Helical" evidence="3">
    <location>
        <begin position="191"/>
        <end position="211"/>
    </location>
</feature>
<feature type="transmembrane region" description="Helical" evidence="3">
    <location>
        <begin position="242"/>
        <end position="262"/>
    </location>
</feature>
<feature type="transmembrane region" description="Helical" evidence="3">
    <location>
        <begin position="274"/>
        <end position="294"/>
    </location>
</feature>
<feature type="transmembrane region" description="Helical" evidence="3">
    <location>
        <begin position="315"/>
        <end position="335"/>
    </location>
</feature>
<feature type="transmembrane region" description="Helical" evidence="3">
    <location>
        <begin position="345"/>
        <end position="365"/>
    </location>
</feature>
<feature type="transmembrane region" description="Helical" evidence="3">
    <location>
        <begin position="384"/>
        <end position="404"/>
    </location>
</feature>
<feature type="transmembrane region" description="Helical" evidence="3">
    <location>
        <begin position="421"/>
        <end position="441"/>
    </location>
</feature>
<feature type="transmembrane region" description="Helical" evidence="3">
    <location>
        <begin position="463"/>
        <end position="483"/>
    </location>
</feature>
<feature type="binding site" evidence="2">
    <location>
        <position position="46"/>
    </location>
    <ligand>
        <name>Ca(2+)</name>
        <dbReference type="ChEBI" id="CHEBI:29108"/>
    </ligand>
</feature>
<feature type="binding site" description="axial binding residue" evidence="2">
    <location>
        <position position="69"/>
    </location>
    <ligand>
        <name>Fe(II)-heme a</name>
        <dbReference type="ChEBI" id="CHEBI:61715"/>
        <note>low-spin</note>
    </ligand>
    <ligandPart>
        <name>Fe</name>
        <dbReference type="ChEBI" id="CHEBI:18248"/>
    </ligandPart>
</feature>
<feature type="binding site" evidence="2">
    <location>
        <position position="248"/>
    </location>
    <ligand>
        <name>Cu cation</name>
        <dbReference type="ChEBI" id="CHEBI:23378"/>
        <label>B</label>
    </ligand>
</feature>
<feature type="binding site" evidence="1">
    <location>
        <position position="252"/>
    </location>
    <ligand>
        <name>O2</name>
        <dbReference type="ChEBI" id="CHEBI:15379"/>
    </ligand>
</feature>
<feature type="binding site" evidence="2">
    <location>
        <position position="297"/>
    </location>
    <ligand>
        <name>Cu cation</name>
        <dbReference type="ChEBI" id="CHEBI:23378"/>
        <label>B</label>
    </ligand>
</feature>
<feature type="binding site" evidence="2">
    <location>
        <position position="298"/>
    </location>
    <ligand>
        <name>Cu cation</name>
        <dbReference type="ChEBI" id="CHEBI:23378"/>
        <label>B</label>
    </ligand>
</feature>
<feature type="binding site" evidence="2">
    <location>
        <position position="375"/>
    </location>
    <ligand>
        <name>Mg(2+)</name>
        <dbReference type="ChEBI" id="CHEBI:18420"/>
        <note>ligand shared with subunit 2</note>
    </ligand>
</feature>
<feature type="binding site" evidence="2">
    <location>
        <position position="376"/>
    </location>
    <ligand>
        <name>Mg(2+)</name>
        <dbReference type="ChEBI" id="CHEBI:18420"/>
        <note>ligand shared with subunit 2</note>
    </ligand>
</feature>
<feature type="binding site" description="axial binding residue" evidence="2">
    <location>
        <position position="383"/>
    </location>
    <ligand>
        <name>heme a3</name>
        <dbReference type="ChEBI" id="CHEBI:83282"/>
        <note>high-spin</note>
    </ligand>
    <ligandPart>
        <name>Fe</name>
        <dbReference type="ChEBI" id="CHEBI:18248"/>
    </ligandPart>
</feature>
<feature type="binding site" description="axial binding residue" evidence="2">
    <location>
        <position position="385"/>
    </location>
    <ligand>
        <name>Fe(II)-heme a</name>
        <dbReference type="ChEBI" id="CHEBI:61715"/>
        <note>low-spin</note>
    </ligand>
    <ligandPart>
        <name>Fe</name>
        <dbReference type="ChEBI" id="CHEBI:18248"/>
    </ligandPart>
</feature>
<feature type="binding site" evidence="2">
    <location>
        <position position="448"/>
    </location>
    <ligand>
        <name>Ca(2+)</name>
        <dbReference type="ChEBI" id="CHEBI:29108"/>
    </ligand>
</feature>
<feature type="cross-link" description="1'-histidyl-3'-tyrosine (His-Tyr)" evidence="2">
    <location>
        <begin position="248"/>
        <end position="252"/>
    </location>
</feature>
<proteinExistence type="inferred from homology"/>
<evidence type="ECO:0000250" key="1">
    <source>
        <dbReference type="UniProtKB" id="P00396"/>
    </source>
</evidence>
<evidence type="ECO:0000250" key="2">
    <source>
        <dbReference type="UniProtKB" id="P00401"/>
    </source>
</evidence>
<evidence type="ECO:0000255" key="3"/>
<evidence type="ECO:0000305" key="4"/>
<name>COX1_CHOCR</name>
<protein>
    <recommendedName>
        <fullName>Cytochrome c oxidase subunit 1</fullName>
        <ecNumber>7.1.1.9</ecNumber>
    </recommendedName>
    <alternativeName>
        <fullName>Cytochrome c oxidase polypeptide I</fullName>
    </alternativeName>
</protein>
<organism>
    <name type="scientific">Chondrus crispus</name>
    <name type="common">Carrageen Irish moss</name>
    <name type="synonym">Polymorpha crispa</name>
    <dbReference type="NCBI Taxonomy" id="2769"/>
    <lineage>
        <taxon>Eukaryota</taxon>
        <taxon>Rhodophyta</taxon>
        <taxon>Florideophyceae</taxon>
        <taxon>Rhodymeniophycidae</taxon>
        <taxon>Gigartinales</taxon>
        <taxon>Gigartinaceae</taxon>
        <taxon>Chondrus</taxon>
    </lineage>
</organism>
<accession>P48866</accession>
<comment type="function">
    <text evidence="2">Component of the cytochrome c oxidase, the last enzyme in the mitochondrial electron transport chain which drives oxidative phosphorylation. The respiratory chain contains 3 multisubunit complexes succinate dehydrogenase (complex II, CII), ubiquinol-cytochrome c oxidoreductase (cytochrome b-c1 complex, complex III, CIII) and cytochrome c oxidase (complex IV, CIV), that cooperate to transfer electrons derived from NADH and succinate to molecular oxygen, creating an electrochemical gradient over the inner membrane that drives transmembrane transport and the ATP synthase. Cytochrome c oxidase is the component of the respiratory chain that catalyzes the reduction of oxygen to water. Electrons originating from reduced cytochrome c in the intermembrane space (IMS) are transferred via the dinuclear copper A center (CU(A)) of subunit 2 and heme A of subunit 1 to the active site in subunit 1, a binuclear center (BNC) formed by heme A3 and copper B (CU(B)). The BNC reduces molecular oxygen to 2 water molecules using 4 electrons from cytochrome c in the IMS and 4 protons from the mitochondrial matrix.</text>
</comment>
<comment type="catalytic activity">
    <reaction evidence="2">
        <text>4 Fe(II)-[cytochrome c] + O2 + 8 H(+)(in) = 4 Fe(III)-[cytochrome c] + 2 H2O + 4 H(+)(out)</text>
        <dbReference type="Rhea" id="RHEA:11436"/>
        <dbReference type="Rhea" id="RHEA-COMP:10350"/>
        <dbReference type="Rhea" id="RHEA-COMP:14399"/>
        <dbReference type="ChEBI" id="CHEBI:15377"/>
        <dbReference type="ChEBI" id="CHEBI:15378"/>
        <dbReference type="ChEBI" id="CHEBI:15379"/>
        <dbReference type="ChEBI" id="CHEBI:29033"/>
        <dbReference type="ChEBI" id="CHEBI:29034"/>
        <dbReference type="EC" id="7.1.1.9"/>
    </reaction>
    <physiologicalReaction direction="left-to-right" evidence="2">
        <dbReference type="Rhea" id="RHEA:11437"/>
    </physiologicalReaction>
</comment>
<comment type="cofactor">
    <cofactor evidence="2">
        <name>heme</name>
        <dbReference type="ChEBI" id="CHEBI:30413"/>
    </cofactor>
    <text evidence="2">Binds 2 heme A groups non-covalently per subunit.</text>
</comment>
<comment type="cofactor">
    <cofactor evidence="2">
        <name>Cu cation</name>
        <dbReference type="ChEBI" id="CHEBI:23378"/>
    </cofactor>
    <text evidence="2">Binds a copper B center.</text>
</comment>
<comment type="pathway">
    <text evidence="2">Energy metabolism; oxidative phosphorylation.</text>
</comment>
<comment type="subunit">
    <text evidence="2">Component of the cytochrome c oxidase (complex IV, CIV), a multisubunit enzyme composed of a catalytic core of 3 subunits and several supernumerary subunits. The complex exists as a monomer or a dimer and forms supercomplexes (SCs) in the inner mitochondrial membrane with ubiquinol-cytochrome c oxidoreductase (cytochrome b-c1 complex, complex III, CIII).</text>
</comment>
<comment type="subcellular location">
    <subcellularLocation>
        <location evidence="2">Mitochondrion inner membrane</location>
        <topology evidence="2">Multi-pass membrane protein</topology>
    </subcellularLocation>
</comment>
<comment type="similarity">
    <text evidence="4">Belongs to the heme-copper respiratory oxidase family.</text>
</comment>
<reference key="1">
    <citation type="journal article" date="1995" name="J. Mol. Biol.">
        <title>Complete sequence of the mitochondrial DNA of the rhodophyte Chondrus crispus (Gigartinales). Gene content and genome organization.</title>
        <authorList>
            <person name="Leblanc C."/>
            <person name="Boyen C."/>
            <person name="Richard O."/>
            <person name="Bonnard G."/>
            <person name="Grienenberger J.-M."/>
            <person name="Kloareg B."/>
        </authorList>
    </citation>
    <scope>NUCLEOTIDE SEQUENCE [GENOMIC DNA]</scope>
    <source>
        <tissue>Apices</tissue>
    </source>
</reference>
<dbReference type="EC" id="7.1.1.9"/>
<dbReference type="EMBL" id="Z47547">
    <property type="protein sequence ID" value="CAA87603.1"/>
    <property type="molecule type" value="Genomic_DNA"/>
</dbReference>
<dbReference type="PIR" id="S59087">
    <property type="entry name" value="S59087"/>
</dbReference>
<dbReference type="RefSeq" id="NP_062482.1">
    <property type="nucleotide sequence ID" value="NC_001677.2"/>
</dbReference>
<dbReference type="SMR" id="P48866"/>
<dbReference type="GeneID" id="809360"/>
<dbReference type="KEGG" id="ccp:ChcroMp03"/>
<dbReference type="UniPathway" id="UPA00705"/>
<dbReference type="GO" id="GO:0005743">
    <property type="term" value="C:mitochondrial inner membrane"/>
    <property type="evidence" value="ECO:0007669"/>
    <property type="project" value="UniProtKB-SubCell"/>
</dbReference>
<dbReference type="GO" id="GO:0045277">
    <property type="term" value="C:respiratory chain complex IV"/>
    <property type="evidence" value="ECO:0007669"/>
    <property type="project" value="InterPro"/>
</dbReference>
<dbReference type="GO" id="GO:0004129">
    <property type="term" value="F:cytochrome-c oxidase activity"/>
    <property type="evidence" value="ECO:0007669"/>
    <property type="project" value="UniProtKB-EC"/>
</dbReference>
<dbReference type="GO" id="GO:0020037">
    <property type="term" value="F:heme binding"/>
    <property type="evidence" value="ECO:0007669"/>
    <property type="project" value="InterPro"/>
</dbReference>
<dbReference type="GO" id="GO:0046872">
    <property type="term" value="F:metal ion binding"/>
    <property type="evidence" value="ECO:0007669"/>
    <property type="project" value="UniProtKB-KW"/>
</dbReference>
<dbReference type="GO" id="GO:0015990">
    <property type="term" value="P:electron transport coupled proton transport"/>
    <property type="evidence" value="ECO:0007669"/>
    <property type="project" value="InterPro"/>
</dbReference>
<dbReference type="GO" id="GO:0006123">
    <property type="term" value="P:mitochondrial electron transport, cytochrome c to oxygen"/>
    <property type="evidence" value="ECO:0007669"/>
    <property type="project" value="TreeGrafter"/>
</dbReference>
<dbReference type="CDD" id="cd01663">
    <property type="entry name" value="Cyt_c_Oxidase_I"/>
    <property type="match status" value="1"/>
</dbReference>
<dbReference type="FunFam" id="1.20.210.10:FF:000001">
    <property type="entry name" value="Cytochrome c oxidase subunit 1"/>
    <property type="match status" value="1"/>
</dbReference>
<dbReference type="Gene3D" id="1.20.210.10">
    <property type="entry name" value="Cytochrome c oxidase-like, subunit I domain"/>
    <property type="match status" value="1"/>
</dbReference>
<dbReference type="InterPro" id="IPR023616">
    <property type="entry name" value="Cyt_c_oxase-like_su1_dom"/>
</dbReference>
<dbReference type="InterPro" id="IPR036927">
    <property type="entry name" value="Cyt_c_oxase-like_su1_sf"/>
</dbReference>
<dbReference type="InterPro" id="IPR000883">
    <property type="entry name" value="Cyt_C_Oxase_1"/>
</dbReference>
<dbReference type="InterPro" id="IPR023615">
    <property type="entry name" value="Cyt_c_Oxase_su1_BS"/>
</dbReference>
<dbReference type="InterPro" id="IPR033944">
    <property type="entry name" value="Cyt_c_oxase_su1_dom"/>
</dbReference>
<dbReference type="InterPro" id="IPR014241">
    <property type="entry name" value="Cyt_c_oxidase_su1_bac"/>
</dbReference>
<dbReference type="NCBIfam" id="TIGR02891">
    <property type="entry name" value="CtaD_CoxA"/>
    <property type="match status" value="1"/>
</dbReference>
<dbReference type="PANTHER" id="PTHR10422">
    <property type="entry name" value="CYTOCHROME C OXIDASE SUBUNIT 1"/>
    <property type="match status" value="1"/>
</dbReference>
<dbReference type="PANTHER" id="PTHR10422:SF18">
    <property type="entry name" value="CYTOCHROME C OXIDASE SUBUNIT 1"/>
    <property type="match status" value="1"/>
</dbReference>
<dbReference type="Pfam" id="PF00115">
    <property type="entry name" value="COX1"/>
    <property type="match status" value="1"/>
</dbReference>
<dbReference type="PRINTS" id="PR01165">
    <property type="entry name" value="CYCOXIDASEI"/>
</dbReference>
<dbReference type="SUPFAM" id="SSF81442">
    <property type="entry name" value="Cytochrome c oxidase subunit I-like"/>
    <property type="match status" value="1"/>
</dbReference>
<dbReference type="PROSITE" id="PS50855">
    <property type="entry name" value="COX1"/>
    <property type="match status" value="1"/>
</dbReference>
<dbReference type="PROSITE" id="PS00077">
    <property type="entry name" value="COX1_CUB"/>
    <property type="match status" value="1"/>
</dbReference>
<gene>
    <name type="primary">COX1</name>
</gene>
<keyword id="KW-0106">Calcium</keyword>
<keyword id="KW-0186">Copper</keyword>
<keyword id="KW-0249">Electron transport</keyword>
<keyword id="KW-0349">Heme</keyword>
<keyword id="KW-0408">Iron</keyword>
<keyword id="KW-0460">Magnesium</keyword>
<keyword id="KW-0472">Membrane</keyword>
<keyword id="KW-0479">Metal-binding</keyword>
<keyword id="KW-0496">Mitochondrion</keyword>
<keyword id="KW-0999">Mitochondrion inner membrane</keyword>
<keyword id="KW-0679">Respiratory chain</keyword>
<keyword id="KW-1278">Translocase</keyword>
<keyword id="KW-0812">Transmembrane</keyword>
<keyword id="KW-1133">Transmembrane helix</keyword>
<keyword id="KW-0813">Transport</keyword>